<reference key="1">
    <citation type="journal article" date="1992" name="Gene">
        <title>Structure of a gene encoding heat-shock protein HSP70 from the unicellular alga Chlamydomonas reinhardtii.</title>
        <authorList>
            <person name="Mueller F.W."/>
            <person name="Igloi G.L."/>
            <person name="Beck C.F."/>
        </authorList>
    </citation>
    <scope>NUCLEOTIDE SEQUENCE [GENOMIC DNA]</scope>
    <source>
        <strain>137c / CC-125</strain>
    </source>
</reference>
<reference key="2">
    <citation type="submission" date="2002-08" db="EMBL/GenBank/DDBJ databases">
        <authorList>
            <person name="Mueller F.W."/>
            <person name="Igloi G.L."/>
            <person name="Beck C.F."/>
        </authorList>
    </citation>
    <scope>SEQUENCE REVISION TO 21; 86; 93; 96; 98; 110 AND 111</scope>
</reference>
<feature type="chain" id="PRO_0000078347" description="Heat shock 70 kDa protein">
    <location>
        <begin position="1"/>
        <end position="650"/>
    </location>
</feature>
<feature type="region of interest" description="Disordered" evidence="1">
    <location>
        <begin position="623"/>
        <end position="650"/>
    </location>
</feature>
<feature type="compositionally biased region" description="Gly residues" evidence="1">
    <location>
        <begin position="623"/>
        <end position="642"/>
    </location>
</feature>
<proteinExistence type="evidence at transcript level"/>
<evidence type="ECO:0000256" key="1">
    <source>
        <dbReference type="SAM" id="MobiDB-lite"/>
    </source>
</evidence>
<evidence type="ECO:0000305" key="2"/>
<gene>
    <name type="primary">HSP70</name>
</gene>
<comment type="induction">
    <text>By light as well as by elevated temperature.</text>
</comment>
<comment type="similarity">
    <text evidence="2">Belongs to the heat shock protein 70 family.</text>
</comment>
<organism>
    <name type="scientific">Chlamydomonas reinhardtii</name>
    <name type="common">Chlamydomonas smithii</name>
    <dbReference type="NCBI Taxonomy" id="3055"/>
    <lineage>
        <taxon>Eukaryota</taxon>
        <taxon>Viridiplantae</taxon>
        <taxon>Chlorophyta</taxon>
        <taxon>core chlorophytes</taxon>
        <taxon>Chlorophyceae</taxon>
        <taxon>CS clade</taxon>
        <taxon>Chlamydomonadales</taxon>
        <taxon>Chlamydomonadaceae</taxon>
        <taxon>Chlamydomonas</taxon>
    </lineage>
</organism>
<protein>
    <recommendedName>
        <fullName>Heat shock 70 kDa protein</fullName>
    </recommendedName>
</protein>
<dbReference type="EMBL" id="M76725">
    <property type="protein sequence ID" value="AAB00730.2"/>
    <property type="molecule type" value="Genomic_DNA"/>
</dbReference>
<dbReference type="PIR" id="JQ1515">
    <property type="entry name" value="JQ1515"/>
</dbReference>
<dbReference type="SMR" id="P25840"/>
<dbReference type="PaxDb" id="3055-EDO97621"/>
<dbReference type="ProMEX" id="P25840"/>
<dbReference type="eggNOG" id="KOG0101">
    <property type="taxonomic scope" value="Eukaryota"/>
</dbReference>
<dbReference type="GO" id="GO:1990718">
    <property type="term" value="C:axonemal central pair projection"/>
    <property type="evidence" value="ECO:0000314"/>
    <property type="project" value="GO_Central"/>
</dbReference>
<dbReference type="GO" id="GO:0005524">
    <property type="term" value="F:ATP binding"/>
    <property type="evidence" value="ECO:0007669"/>
    <property type="project" value="UniProtKB-KW"/>
</dbReference>
<dbReference type="GO" id="GO:0140662">
    <property type="term" value="F:ATP-dependent protein folding chaperone"/>
    <property type="evidence" value="ECO:0007669"/>
    <property type="project" value="InterPro"/>
</dbReference>
<dbReference type="CDD" id="cd10233">
    <property type="entry name" value="ASKHA_NBD_HSP70_HSPA1"/>
    <property type="match status" value="1"/>
</dbReference>
<dbReference type="FunFam" id="2.60.34.10:FF:000002">
    <property type="entry name" value="Heat shock 70 kDa"/>
    <property type="match status" value="1"/>
</dbReference>
<dbReference type="FunFam" id="3.90.640.10:FF:000002">
    <property type="entry name" value="Heat shock 70 kDa"/>
    <property type="match status" value="1"/>
</dbReference>
<dbReference type="FunFam" id="3.30.30.30:FF:000019">
    <property type="entry name" value="Heat shock 70 kDa protein"/>
    <property type="match status" value="1"/>
</dbReference>
<dbReference type="FunFam" id="3.30.420.40:FF:000172">
    <property type="entry name" value="Heat shock 70 kDa protein"/>
    <property type="match status" value="1"/>
</dbReference>
<dbReference type="FunFam" id="3.30.420.40:FF:000465">
    <property type="entry name" value="Heat shock cognate 70 kDa protein 2"/>
    <property type="match status" value="1"/>
</dbReference>
<dbReference type="FunFam" id="1.20.1270.10:FF:000016">
    <property type="entry name" value="Heat shock protein 70"/>
    <property type="match status" value="1"/>
</dbReference>
<dbReference type="FunFam" id="3.30.420.40:FF:000026">
    <property type="entry name" value="Heat shock protein 70"/>
    <property type="match status" value="1"/>
</dbReference>
<dbReference type="Gene3D" id="1.20.1270.10">
    <property type="match status" value="1"/>
</dbReference>
<dbReference type="Gene3D" id="3.30.30.30">
    <property type="match status" value="1"/>
</dbReference>
<dbReference type="Gene3D" id="3.30.420.40">
    <property type="match status" value="2"/>
</dbReference>
<dbReference type="Gene3D" id="3.90.640.10">
    <property type="entry name" value="Actin, Chain A, domain 4"/>
    <property type="match status" value="1"/>
</dbReference>
<dbReference type="Gene3D" id="2.60.34.10">
    <property type="entry name" value="Substrate Binding Domain Of DNAk, Chain A, domain 1"/>
    <property type="match status" value="1"/>
</dbReference>
<dbReference type="InterPro" id="IPR043129">
    <property type="entry name" value="ATPase_NBD"/>
</dbReference>
<dbReference type="InterPro" id="IPR018181">
    <property type="entry name" value="Heat_shock_70_CS"/>
</dbReference>
<dbReference type="InterPro" id="IPR029048">
    <property type="entry name" value="HSP70_C_sf"/>
</dbReference>
<dbReference type="InterPro" id="IPR029047">
    <property type="entry name" value="HSP70_peptide-bd_sf"/>
</dbReference>
<dbReference type="InterPro" id="IPR013126">
    <property type="entry name" value="Hsp_70_fam"/>
</dbReference>
<dbReference type="NCBIfam" id="NF001413">
    <property type="entry name" value="PRK00290.1"/>
    <property type="match status" value="1"/>
</dbReference>
<dbReference type="PANTHER" id="PTHR19375">
    <property type="entry name" value="HEAT SHOCK PROTEIN 70KDA"/>
    <property type="match status" value="1"/>
</dbReference>
<dbReference type="Pfam" id="PF00012">
    <property type="entry name" value="HSP70"/>
    <property type="match status" value="1"/>
</dbReference>
<dbReference type="PRINTS" id="PR00301">
    <property type="entry name" value="HEATSHOCK70"/>
</dbReference>
<dbReference type="SUPFAM" id="SSF53067">
    <property type="entry name" value="Actin-like ATPase domain"/>
    <property type="match status" value="2"/>
</dbReference>
<dbReference type="SUPFAM" id="SSF100934">
    <property type="entry name" value="Heat shock protein 70kD (HSP70), C-terminal subdomain"/>
    <property type="match status" value="1"/>
</dbReference>
<dbReference type="SUPFAM" id="SSF100920">
    <property type="entry name" value="Heat shock protein 70kD (HSP70), peptide-binding domain"/>
    <property type="match status" value="1"/>
</dbReference>
<dbReference type="PROSITE" id="PS00297">
    <property type="entry name" value="HSP70_1"/>
    <property type="match status" value="1"/>
</dbReference>
<dbReference type="PROSITE" id="PS00329">
    <property type="entry name" value="HSP70_2"/>
    <property type="match status" value="1"/>
</dbReference>
<dbReference type="PROSITE" id="PS01036">
    <property type="entry name" value="HSP70_3"/>
    <property type="match status" value="1"/>
</dbReference>
<keyword id="KW-0067">ATP-binding</keyword>
<keyword id="KW-0547">Nucleotide-binding</keyword>
<keyword id="KW-0346">Stress response</keyword>
<name>HSP70_CHLRE</name>
<accession>P25840</accession>
<sequence>MGKEAPAIGIDLGTTYSCVGVWQNDRVEIIANDQGNRTTPSYVAFTDTERLIGDAAKNQVAMNPRHTVFDAKRLIGRKFSDPIVQADIKLWPFQVRAGAHDVPEIVVSYKNEEKVFKAEEISSMVLIKMKETAQASLGADREVKKAVVTVPAYFNDSQRQATKDAGMIAGLEVLRIINEPTAAAISYGLDKKDSGLGERNVLIFDLGGGTFDVSLLTIEEGIFEVKATAGDTHLGGEDFDERLVNHFANEFQRKYKKDLKTSPRALRRLRTACERAKRTLSSAAQTTIELDSLFEGVDFATSITRARFEELCMDLFRKCMDPVEKCLHDAKMDKMTVHDVVLVGGSTRIPKVQQLLQDFFNGKELNKSINPDEAVAYGAAVQAAILTGEGGEKVQDLLLLDVTPLSLGLETAGGVMTVLIPRNTTIPTKKEQVFSTYSDNQPGVLIQVYEGERARTKDNNLLGKFELTGIPPAPRGVPQINVIFDIDANGILNVSAEDKTTGNKNKITITNDKGRLSKDEIERMVQEAEKYKADDEQLKKVEAKNSLENYAYNMRNTIREDKVASQLSASDKESMEKALTAAMDWLEANQMAEVEEFEHHLKELEGLCNPIITRLYQGGAGAGGMPGGGAGAGAAPSGGSGAGPKIEEVD</sequence>